<proteinExistence type="evidence at protein level"/>
<name>MUG42_SCHPO</name>
<keyword id="KW-0469">Meiosis</keyword>
<keyword id="KW-1185">Reference proteome</keyword>
<comment type="function">
    <text evidence="1">Has a role in meiosis.</text>
</comment>
<reference key="1">
    <citation type="journal article" date="2002" name="Nature">
        <title>The genome sequence of Schizosaccharomyces pombe.</title>
        <authorList>
            <person name="Wood V."/>
            <person name="Gwilliam R."/>
            <person name="Rajandream M.A."/>
            <person name="Lyne M.H."/>
            <person name="Lyne R."/>
            <person name="Stewart A."/>
            <person name="Sgouros J.G."/>
            <person name="Peat N."/>
            <person name="Hayles J."/>
            <person name="Baker S.G."/>
            <person name="Basham D."/>
            <person name="Bowman S."/>
            <person name="Brooks K."/>
            <person name="Brown D."/>
            <person name="Brown S."/>
            <person name="Chillingworth T."/>
            <person name="Churcher C.M."/>
            <person name="Collins M."/>
            <person name="Connor R."/>
            <person name="Cronin A."/>
            <person name="Davis P."/>
            <person name="Feltwell T."/>
            <person name="Fraser A."/>
            <person name="Gentles S."/>
            <person name="Goble A."/>
            <person name="Hamlin N."/>
            <person name="Harris D.E."/>
            <person name="Hidalgo J."/>
            <person name="Hodgson G."/>
            <person name="Holroyd S."/>
            <person name="Hornsby T."/>
            <person name="Howarth S."/>
            <person name="Huckle E.J."/>
            <person name="Hunt S."/>
            <person name="Jagels K."/>
            <person name="James K.D."/>
            <person name="Jones L."/>
            <person name="Jones M."/>
            <person name="Leather S."/>
            <person name="McDonald S."/>
            <person name="McLean J."/>
            <person name="Mooney P."/>
            <person name="Moule S."/>
            <person name="Mungall K.L."/>
            <person name="Murphy L.D."/>
            <person name="Niblett D."/>
            <person name="Odell C."/>
            <person name="Oliver K."/>
            <person name="O'Neil S."/>
            <person name="Pearson D."/>
            <person name="Quail M.A."/>
            <person name="Rabbinowitsch E."/>
            <person name="Rutherford K.M."/>
            <person name="Rutter S."/>
            <person name="Saunders D."/>
            <person name="Seeger K."/>
            <person name="Sharp S."/>
            <person name="Skelton J."/>
            <person name="Simmonds M.N."/>
            <person name="Squares R."/>
            <person name="Squares S."/>
            <person name="Stevens K."/>
            <person name="Taylor K."/>
            <person name="Taylor R.G."/>
            <person name="Tivey A."/>
            <person name="Walsh S.V."/>
            <person name="Warren T."/>
            <person name="Whitehead S."/>
            <person name="Woodward J.R."/>
            <person name="Volckaert G."/>
            <person name="Aert R."/>
            <person name="Robben J."/>
            <person name="Grymonprez B."/>
            <person name="Weltjens I."/>
            <person name="Vanstreels E."/>
            <person name="Rieger M."/>
            <person name="Schaefer M."/>
            <person name="Mueller-Auer S."/>
            <person name="Gabel C."/>
            <person name="Fuchs M."/>
            <person name="Duesterhoeft A."/>
            <person name="Fritzc C."/>
            <person name="Holzer E."/>
            <person name="Moestl D."/>
            <person name="Hilbert H."/>
            <person name="Borzym K."/>
            <person name="Langer I."/>
            <person name="Beck A."/>
            <person name="Lehrach H."/>
            <person name="Reinhardt R."/>
            <person name="Pohl T.M."/>
            <person name="Eger P."/>
            <person name="Zimmermann W."/>
            <person name="Wedler H."/>
            <person name="Wambutt R."/>
            <person name="Purnelle B."/>
            <person name="Goffeau A."/>
            <person name="Cadieu E."/>
            <person name="Dreano S."/>
            <person name="Gloux S."/>
            <person name="Lelaure V."/>
            <person name="Mottier S."/>
            <person name="Galibert F."/>
            <person name="Aves S.J."/>
            <person name="Xiang Z."/>
            <person name="Hunt C."/>
            <person name="Moore K."/>
            <person name="Hurst S.M."/>
            <person name="Lucas M."/>
            <person name="Rochet M."/>
            <person name="Gaillardin C."/>
            <person name="Tallada V.A."/>
            <person name="Garzon A."/>
            <person name="Thode G."/>
            <person name="Daga R.R."/>
            <person name="Cruzado L."/>
            <person name="Jimenez J."/>
            <person name="Sanchez M."/>
            <person name="del Rey F."/>
            <person name="Benito J."/>
            <person name="Dominguez A."/>
            <person name="Revuelta J.L."/>
            <person name="Moreno S."/>
            <person name="Armstrong J."/>
            <person name="Forsburg S.L."/>
            <person name="Cerutti L."/>
            <person name="Lowe T."/>
            <person name="McCombie W.R."/>
            <person name="Paulsen I."/>
            <person name="Potashkin J."/>
            <person name="Shpakovski G.V."/>
            <person name="Ussery D."/>
            <person name="Barrell B.G."/>
            <person name="Nurse P."/>
        </authorList>
    </citation>
    <scope>NUCLEOTIDE SEQUENCE [LARGE SCALE GENOMIC DNA]</scope>
    <source>
        <strain>972 / ATCC 24843</strain>
    </source>
</reference>
<reference key="2">
    <citation type="journal article" date="2005" name="Curr. Biol.">
        <title>A large-scale screen in S. pombe identifies seven novel genes required for critical meiotic events.</title>
        <authorList>
            <person name="Martin-Castellanos C."/>
            <person name="Blanco M."/>
            <person name="Rozalen A.E."/>
            <person name="Perez-Hidalgo L."/>
            <person name="Garcia A.I."/>
            <person name="Conde F."/>
            <person name="Mata J."/>
            <person name="Ellermeier C."/>
            <person name="Davis L."/>
            <person name="San-Segundo P."/>
            <person name="Smith G.R."/>
            <person name="Moreno S."/>
        </authorList>
    </citation>
    <scope>FUNCTION IN MEIOSIS</scope>
</reference>
<evidence type="ECO:0000269" key="1">
    <source>
    </source>
</evidence>
<protein>
    <recommendedName>
        <fullName>Meiotically up-regulated gene 42 protein</fullName>
    </recommendedName>
</protein>
<accession>Q09886</accession>
<feature type="chain" id="PRO_0000116539" description="Meiotically up-regulated gene 42 protein">
    <location>
        <begin position="1"/>
        <end position="115"/>
    </location>
</feature>
<gene>
    <name type="primary">mug42</name>
    <name type="ORF">SPCC584.12</name>
</gene>
<sequence>MGILIGTFPPRRRPTLHETENHVKKKNWRCGKGIKCFFKPSDQVYLVGQVDCRFLLHHNAKNKQFPLIFVTNFITSLPNFQFPLFFFVSLLHLYRRPRNQISTRKYTPHTQSGRR</sequence>
<dbReference type="EMBL" id="CU329672">
    <property type="protein sequence ID" value="CAB37425.1"/>
    <property type="molecule type" value="Genomic_DNA"/>
</dbReference>
<dbReference type="PIR" id="T39132">
    <property type="entry name" value="S62526"/>
</dbReference>
<dbReference type="RefSeq" id="NP_588217.1">
    <property type="nucleotide sequence ID" value="NM_001023207.1"/>
</dbReference>
<dbReference type="PaxDb" id="4896-SPCC584.12.1"/>
<dbReference type="EnsemblFungi" id="SPCC584.12.1">
    <property type="protein sequence ID" value="SPCC584.12.1:pep"/>
    <property type="gene ID" value="SPCC584.12"/>
</dbReference>
<dbReference type="GeneID" id="2539417"/>
<dbReference type="KEGG" id="spo:2539417"/>
<dbReference type="PomBase" id="SPCC584.12">
    <property type="gene designation" value="mug42"/>
</dbReference>
<dbReference type="VEuPathDB" id="FungiDB:SPCC584.12"/>
<dbReference type="HOGENOM" id="CLU_2110393_0_0_1"/>
<dbReference type="InParanoid" id="Q09886"/>
<dbReference type="PRO" id="PR:Q09886"/>
<dbReference type="Proteomes" id="UP000002485">
    <property type="component" value="Chromosome III"/>
</dbReference>
<dbReference type="GO" id="GO:0051321">
    <property type="term" value="P:meiotic cell cycle"/>
    <property type="evidence" value="ECO:0007669"/>
    <property type="project" value="UniProtKB-KW"/>
</dbReference>
<organism>
    <name type="scientific">Schizosaccharomyces pombe (strain 972 / ATCC 24843)</name>
    <name type="common">Fission yeast</name>
    <dbReference type="NCBI Taxonomy" id="284812"/>
    <lineage>
        <taxon>Eukaryota</taxon>
        <taxon>Fungi</taxon>
        <taxon>Dikarya</taxon>
        <taxon>Ascomycota</taxon>
        <taxon>Taphrinomycotina</taxon>
        <taxon>Schizosaccharomycetes</taxon>
        <taxon>Schizosaccharomycetales</taxon>
        <taxon>Schizosaccharomycetaceae</taxon>
        <taxon>Schizosaccharomyces</taxon>
    </lineage>
</organism>